<keyword id="KW-0963">Cytoplasm</keyword>
<keyword id="KW-0489">Methyltransferase</keyword>
<keyword id="KW-0949">S-adenosyl-L-methionine</keyword>
<keyword id="KW-0808">Transferase</keyword>
<feature type="chain" id="PRO_1000134077" description="Thiopurine S-methyltransferase">
    <location>
        <begin position="1"/>
        <end position="218"/>
    </location>
</feature>
<feature type="binding site" evidence="1">
    <location>
        <position position="10"/>
    </location>
    <ligand>
        <name>S-adenosyl-L-methionine</name>
        <dbReference type="ChEBI" id="CHEBI:59789"/>
    </ligand>
</feature>
<feature type="binding site" evidence="1">
    <location>
        <position position="45"/>
    </location>
    <ligand>
        <name>S-adenosyl-L-methionine</name>
        <dbReference type="ChEBI" id="CHEBI:59789"/>
    </ligand>
</feature>
<feature type="binding site" evidence="1">
    <location>
        <position position="66"/>
    </location>
    <ligand>
        <name>S-adenosyl-L-methionine</name>
        <dbReference type="ChEBI" id="CHEBI:59789"/>
    </ligand>
</feature>
<feature type="binding site" evidence="1">
    <location>
        <position position="123"/>
    </location>
    <ligand>
        <name>S-adenosyl-L-methionine</name>
        <dbReference type="ChEBI" id="CHEBI:59789"/>
    </ligand>
</feature>
<name>TPMT_PSEA8</name>
<proteinExistence type="inferred from homology"/>
<comment type="catalytic activity">
    <reaction evidence="1">
        <text>S-adenosyl-L-methionine + a thiopurine = S-adenosyl-L-homocysteine + a thiopurine S-methylether.</text>
        <dbReference type="EC" id="2.1.1.67"/>
    </reaction>
</comment>
<comment type="subcellular location">
    <subcellularLocation>
        <location evidence="1">Cytoplasm</location>
    </subcellularLocation>
</comment>
<comment type="similarity">
    <text evidence="1">Belongs to the class I-like SAM-binding methyltransferase superfamily. TPMT family.</text>
</comment>
<sequence length="218" mass="24894">MQADFWHARWANNQIGFHLDEINPYLMRHLSRLRLQAGEQILVPLCGKTLDLAWLAAQGLEVLGVELSEKAVSDFFEEHDLRPEIDQLDGFRRYRVAGITLLQGDFFALQAEHLAQCRAFYDRAALIALPPEMRERYAGHLQAVLPTRSLGLLVTIDYPQAEMAGPPFAVPDEEVRGYYAGGWRIEELERGDVLGVNWKFLERGVSWLDEAVYLLERG</sequence>
<protein>
    <recommendedName>
        <fullName evidence="1">Thiopurine S-methyltransferase</fullName>
        <ecNumber evidence="1">2.1.1.67</ecNumber>
    </recommendedName>
    <alternativeName>
        <fullName evidence="1">Thiopurine methyltransferase</fullName>
    </alternativeName>
</protein>
<accession>B7VAP9</accession>
<gene>
    <name evidence="1" type="primary">tpm</name>
    <name type="ordered locus">PLES_22331</name>
</gene>
<reference key="1">
    <citation type="journal article" date="2009" name="Genome Res.">
        <title>Newly introduced genomic prophage islands are critical determinants of in vivo competitiveness in the Liverpool epidemic strain of Pseudomonas aeruginosa.</title>
        <authorList>
            <person name="Winstanley C."/>
            <person name="Langille M.G.I."/>
            <person name="Fothergill J.L."/>
            <person name="Kukavica-Ibrulj I."/>
            <person name="Paradis-Bleau C."/>
            <person name="Sanschagrin F."/>
            <person name="Thomson N.R."/>
            <person name="Winsor G.L."/>
            <person name="Quail M.A."/>
            <person name="Lennard N."/>
            <person name="Bignell A."/>
            <person name="Clarke L."/>
            <person name="Seeger K."/>
            <person name="Saunders D."/>
            <person name="Harris D."/>
            <person name="Parkhill J."/>
            <person name="Hancock R.E.W."/>
            <person name="Brinkman F.S.L."/>
            <person name="Levesque R.C."/>
        </authorList>
    </citation>
    <scope>NUCLEOTIDE SEQUENCE [LARGE SCALE GENOMIC DNA]</scope>
    <source>
        <strain>LESB58</strain>
    </source>
</reference>
<dbReference type="EC" id="2.1.1.67" evidence="1"/>
<dbReference type="EMBL" id="FM209186">
    <property type="protein sequence ID" value="CAW26960.1"/>
    <property type="molecule type" value="Genomic_DNA"/>
</dbReference>
<dbReference type="RefSeq" id="WP_003106082.1">
    <property type="nucleotide sequence ID" value="NC_011770.1"/>
</dbReference>
<dbReference type="SMR" id="B7VAP9"/>
<dbReference type="KEGG" id="pag:PLES_22331"/>
<dbReference type="HOGENOM" id="CLU_085515_1_0_6"/>
<dbReference type="GO" id="GO:0005737">
    <property type="term" value="C:cytoplasm"/>
    <property type="evidence" value="ECO:0007669"/>
    <property type="project" value="UniProtKB-SubCell"/>
</dbReference>
<dbReference type="GO" id="GO:0008119">
    <property type="term" value="F:thiopurine S-methyltransferase activity"/>
    <property type="evidence" value="ECO:0007669"/>
    <property type="project" value="UniProtKB-UniRule"/>
</dbReference>
<dbReference type="GO" id="GO:0032259">
    <property type="term" value="P:methylation"/>
    <property type="evidence" value="ECO:0007669"/>
    <property type="project" value="UniProtKB-KW"/>
</dbReference>
<dbReference type="GO" id="GO:0010038">
    <property type="term" value="P:response to metal ion"/>
    <property type="evidence" value="ECO:0007669"/>
    <property type="project" value="InterPro"/>
</dbReference>
<dbReference type="FunFam" id="3.40.50.150:FF:000101">
    <property type="entry name" value="Thiopurine S-methyltransferase"/>
    <property type="match status" value="1"/>
</dbReference>
<dbReference type="Gene3D" id="3.40.50.150">
    <property type="entry name" value="Vaccinia Virus protein VP39"/>
    <property type="match status" value="1"/>
</dbReference>
<dbReference type="HAMAP" id="MF_00812">
    <property type="entry name" value="Thiopur_methtran"/>
    <property type="match status" value="1"/>
</dbReference>
<dbReference type="InterPro" id="IPR029063">
    <property type="entry name" value="SAM-dependent_MTases_sf"/>
</dbReference>
<dbReference type="InterPro" id="IPR022474">
    <property type="entry name" value="Thiopur_S-MeTfrase_Se/Te_detox"/>
</dbReference>
<dbReference type="InterPro" id="IPR025835">
    <property type="entry name" value="Thiopurine_S-MeTrfase"/>
</dbReference>
<dbReference type="InterPro" id="IPR008854">
    <property type="entry name" value="TPMT"/>
</dbReference>
<dbReference type="NCBIfam" id="NF009732">
    <property type="entry name" value="PRK13255.1"/>
    <property type="match status" value="1"/>
</dbReference>
<dbReference type="NCBIfam" id="TIGR03840">
    <property type="entry name" value="TMPT_Se_Te"/>
    <property type="match status" value="1"/>
</dbReference>
<dbReference type="PANTHER" id="PTHR10259">
    <property type="entry name" value="THIOPURINE S-METHYLTRANSFERASE"/>
    <property type="match status" value="1"/>
</dbReference>
<dbReference type="PANTHER" id="PTHR10259:SF11">
    <property type="entry name" value="THIOPURINE S-METHYLTRANSFERASE"/>
    <property type="match status" value="1"/>
</dbReference>
<dbReference type="Pfam" id="PF05724">
    <property type="entry name" value="TPMT"/>
    <property type="match status" value="1"/>
</dbReference>
<dbReference type="PIRSF" id="PIRSF023956">
    <property type="entry name" value="Thiopurine_S-methyltransferase"/>
    <property type="match status" value="1"/>
</dbReference>
<dbReference type="SUPFAM" id="SSF53335">
    <property type="entry name" value="S-adenosyl-L-methionine-dependent methyltransferases"/>
    <property type="match status" value="1"/>
</dbReference>
<dbReference type="PROSITE" id="PS51585">
    <property type="entry name" value="SAM_MT_TPMT"/>
    <property type="match status" value="1"/>
</dbReference>
<organism>
    <name type="scientific">Pseudomonas aeruginosa (strain LESB58)</name>
    <dbReference type="NCBI Taxonomy" id="557722"/>
    <lineage>
        <taxon>Bacteria</taxon>
        <taxon>Pseudomonadati</taxon>
        <taxon>Pseudomonadota</taxon>
        <taxon>Gammaproteobacteria</taxon>
        <taxon>Pseudomonadales</taxon>
        <taxon>Pseudomonadaceae</taxon>
        <taxon>Pseudomonas</taxon>
    </lineage>
</organism>
<evidence type="ECO:0000255" key="1">
    <source>
        <dbReference type="HAMAP-Rule" id="MF_00812"/>
    </source>
</evidence>